<accession>P66587</accession>
<accession>Q8NL49</accession>
<comment type="function">
    <text evidence="1">With S4 and S12 plays an important role in translational accuracy.</text>
</comment>
<comment type="function">
    <text evidence="1">Located at the back of the 30S subunit body where it stabilizes the conformation of the head with respect to the body.</text>
</comment>
<comment type="subunit">
    <text evidence="1">Part of the 30S ribosomal subunit. Contacts proteins S4 and S8.</text>
</comment>
<comment type="domain">
    <text>The N-terminal domain interacts with the head of the 30S subunit; the C-terminal domain interacts with the body and contacts protein S4. The interaction surface between S4 and S5 is involved in control of translational fidelity.</text>
</comment>
<comment type="similarity">
    <text evidence="1">Belongs to the universal ribosomal protein uS5 family.</text>
</comment>
<dbReference type="EMBL" id="AE008922">
    <property type="protein sequence ID" value="AAM40222.1"/>
    <property type="molecule type" value="Genomic_DNA"/>
</dbReference>
<dbReference type="RefSeq" id="NP_636298.1">
    <property type="nucleotide sequence ID" value="NC_003902.1"/>
</dbReference>
<dbReference type="RefSeq" id="WP_003486682.1">
    <property type="nucleotide sequence ID" value="NC_003902.1"/>
</dbReference>
<dbReference type="SMR" id="P66587"/>
<dbReference type="STRING" id="190485.XCC0912"/>
<dbReference type="EnsemblBacteria" id="AAM40222">
    <property type="protein sequence ID" value="AAM40222"/>
    <property type="gene ID" value="XCC0912"/>
</dbReference>
<dbReference type="GeneID" id="97509353"/>
<dbReference type="KEGG" id="xcc:XCC0912"/>
<dbReference type="PATRIC" id="fig|190485.4.peg.984"/>
<dbReference type="eggNOG" id="COG0098">
    <property type="taxonomic scope" value="Bacteria"/>
</dbReference>
<dbReference type="HOGENOM" id="CLU_065898_2_2_6"/>
<dbReference type="OrthoDB" id="9809045at2"/>
<dbReference type="PRO" id="PR:P66587"/>
<dbReference type="Proteomes" id="UP000001010">
    <property type="component" value="Chromosome"/>
</dbReference>
<dbReference type="GO" id="GO:0022627">
    <property type="term" value="C:cytosolic small ribosomal subunit"/>
    <property type="evidence" value="ECO:0000318"/>
    <property type="project" value="GO_Central"/>
</dbReference>
<dbReference type="GO" id="GO:0019843">
    <property type="term" value="F:rRNA binding"/>
    <property type="evidence" value="ECO:0007669"/>
    <property type="project" value="UniProtKB-UniRule"/>
</dbReference>
<dbReference type="GO" id="GO:0003735">
    <property type="term" value="F:structural constituent of ribosome"/>
    <property type="evidence" value="ECO:0000318"/>
    <property type="project" value="GO_Central"/>
</dbReference>
<dbReference type="GO" id="GO:0006412">
    <property type="term" value="P:translation"/>
    <property type="evidence" value="ECO:0000318"/>
    <property type="project" value="GO_Central"/>
</dbReference>
<dbReference type="FunFam" id="3.30.160.20:FF:000001">
    <property type="entry name" value="30S ribosomal protein S5"/>
    <property type="match status" value="1"/>
</dbReference>
<dbReference type="FunFam" id="3.30.230.10:FF:000002">
    <property type="entry name" value="30S ribosomal protein S5"/>
    <property type="match status" value="1"/>
</dbReference>
<dbReference type="Gene3D" id="3.30.160.20">
    <property type="match status" value="1"/>
</dbReference>
<dbReference type="Gene3D" id="3.30.230.10">
    <property type="match status" value="1"/>
</dbReference>
<dbReference type="HAMAP" id="MF_01307_B">
    <property type="entry name" value="Ribosomal_uS5_B"/>
    <property type="match status" value="1"/>
</dbReference>
<dbReference type="InterPro" id="IPR020568">
    <property type="entry name" value="Ribosomal_Su5_D2-typ_SF"/>
</dbReference>
<dbReference type="InterPro" id="IPR000851">
    <property type="entry name" value="Ribosomal_uS5"/>
</dbReference>
<dbReference type="InterPro" id="IPR005712">
    <property type="entry name" value="Ribosomal_uS5_bac-type"/>
</dbReference>
<dbReference type="InterPro" id="IPR005324">
    <property type="entry name" value="Ribosomal_uS5_C"/>
</dbReference>
<dbReference type="InterPro" id="IPR013810">
    <property type="entry name" value="Ribosomal_uS5_N"/>
</dbReference>
<dbReference type="InterPro" id="IPR018192">
    <property type="entry name" value="Ribosomal_uS5_N_CS"/>
</dbReference>
<dbReference type="InterPro" id="IPR014721">
    <property type="entry name" value="Ribsml_uS5_D2-typ_fold_subgr"/>
</dbReference>
<dbReference type="NCBIfam" id="TIGR01021">
    <property type="entry name" value="rpsE_bact"/>
    <property type="match status" value="1"/>
</dbReference>
<dbReference type="PANTHER" id="PTHR48277">
    <property type="entry name" value="MITOCHONDRIAL RIBOSOMAL PROTEIN S5"/>
    <property type="match status" value="1"/>
</dbReference>
<dbReference type="PANTHER" id="PTHR48277:SF1">
    <property type="entry name" value="MITOCHONDRIAL RIBOSOMAL PROTEIN S5"/>
    <property type="match status" value="1"/>
</dbReference>
<dbReference type="Pfam" id="PF00333">
    <property type="entry name" value="Ribosomal_S5"/>
    <property type="match status" value="1"/>
</dbReference>
<dbReference type="Pfam" id="PF03719">
    <property type="entry name" value="Ribosomal_S5_C"/>
    <property type="match status" value="1"/>
</dbReference>
<dbReference type="SUPFAM" id="SSF54768">
    <property type="entry name" value="dsRNA-binding domain-like"/>
    <property type="match status" value="1"/>
</dbReference>
<dbReference type="SUPFAM" id="SSF54211">
    <property type="entry name" value="Ribosomal protein S5 domain 2-like"/>
    <property type="match status" value="1"/>
</dbReference>
<dbReference type="PROSITE" id="PS00585">
    <property type="entry name" value="RIBOSOMAL_S5"/>
    <property type="match status" value="1"/>
</dbReference>
<dbReference type="PROSITE" id="PS50881">
    <property type="entry name" value="S5_DSRBD"/>
    <property type="match status" value="1"/>
</dbReference>
<sequence>MAEERAPRGRDRDRNREEKVDDGMIEKLVAVNRVSKTVKGGRQFTFTALTVVGDGLGKVGFGYGKAREVPVAIQKSMEQARKNLATVDLNNGTLWHAVKSGHGAARVYMQPASEGTGVIAGGAMRAVLEAVGVKNVLAKAVGSRNPINLVRATLKGLSEVQSPARVAAKRGKKVEELNHG</sequence>
<proteinExistence type="inferred from homology"/>
<evidence type="ECO:0000255" key="1">
    <source>
        <dbReference type="HAMAP-Rule" id="MF_01307"/>
    </source>
</evidence>
<evidence type="ECO:0000305" key="2"/>
<gene>
    <name evidence="1" type="primary">rpsE</name>
    <name type="ordered locus">XCC0912</name>
</gene>
<reference key="1">
    <citation type="journal article" date="2002" name="Nature">
        <title>Comparison of the genomes of two Xanthomonas pathogens with differing host specificities.</title>
        <authorList>
            <person name="da Silva A.C.R."/>
            <person name="Ferro J.A."/>
            <person name="Reinach F.C."/>
            <person name="Farah C.S."/>
            <person name="Furlan L.R."/>
            <person name="Quaggio R.B."/>
            <person name="Monteiro-Vitorello C.B."/>
            <person name="Van Sluys M.A."/>
            <person name="Almeida N.F. Jr."/>
            <person name="Alves L.M.C."/>
            <person name="do Amaral A.M."/>
            <person name="Bertolini M.C."/>
            <person name="Camargo L.E.A."/>
            <person name="Camarotte G."/>
            <person name="Cannavan F."/>
            <person name="Cardozo J."/>
            <person name="Chambergo F."/>
            <person name="Ciapina L.P."/>
            <person name="Cicarelli R.M.B."/>
            <person name="Coutinho L.L."/>
            <person name="Cursino-Santos J.R."/>
            <person name="El-Dorry H."/>
            <person name="Faria J.B."/>
            <person name="Ferreira A.J.S."/>
            <person name="Ferreira R.C.C."/>
            <person name="Ferro M.I.T."/>
            <person name="Formighieri E.F."/>
            <person name="Franco M.C."/>
            <person name="Greggio C.C."/>
            <person name="Gruber A."/>
            <person name="Katsuyama A.M."/>
            <person name="Kishi L.T."/>
            <person name="Leite R.P."/>
            <person name="Lemos E.G.M."/>
            <person name="Lemos M.V.F."/>
            <person name="Locali E.C."/>
            <person name="Machado M.A."/>
            <person name="Madeira A.M.B.N."/>
            <person name="Martinez-Rossi N.M."/>
            <person name="Martins E.C."/>
            <person name="Meidanis J."/>
            <person name="Menck C.F.M."/>
            <person name="Miyaki C.Y."/>
            <person name="Moon D.H."/>
            <person name="Moreira L.M."/>
            <person name="Novo M.T.M."/>
            <person name="Okura V.K."/>
            <person name="Oliveira M.C."/>
            <person name="Oliveira V.R."/>
            <person name="Pereira H.A."/>
            <person name="Rossi A."/>
            <person name="Sena J.A.D."/>
            <person name="Silva C."/>
            <person name="de Souza R.F."/>
            <person name="Spinola L.A.F."/>
            <person name="Takita M.A."/>
            <person name="Tamura R.E."/>
            <person name="Teixeira E.C."/>
            <person name="Tezza R.I.D."/>
            <person name="Trindade dos Santos M."/>
            <person name="Truffi D."/>
            <person name="Tsai S.M."/>
            <person name="White F.F."/>
            <person name="Setubal J.C."/>
            <person name="Kitajima J.P."/>
        </authorList>
    </citation>
    <scope>NUCLEOTIDE SEQUENCE [LARGE SCALE GENOMIC DNA]</scope>
    <source>
        <strain>ATCC 33913 / DSM 3586 / NCPPB 528 / LMG 568 / P 25</strain>
    </source>
</reference>
<protein>
    <recommendedName>
        <fullName evidence="1">Small ribosomal subunit protein uS5</fullName>
    </recommendedName>
    <alternativeName>
        <fullName evidence="2">30S ribosomal protein S5</fullName>
    </alternativeName>
</protein>
<name>RS5_XANCP</name>
<feature type="chain" id="PRO_0000131636" description="Small ribosomal subunit protein uS5">
    <location>
        <begin position="1"/>
        <end position="180"/>
    </location>
</feature>
<feature type="domain" description="S5 DRBM" evidence="1">
    <location>
        <begin position="24"/>
        <end position="87"/>
    </location>
</feature>
<organism>
    <name type="scientific">Xanthomonas campestris pv. campestris (strain ATCC 33913 / DSM 3586 / NCPPB 528 / LMG 568 / P 25)</name>
    <dbReference type="NCBI Taxonomy" id="190485"/>
    <lineage>
        <taxon>Bacteria</taxon>
        <taxon>Pseudomonadati</taxon>
        <taxon>Pseudomonadota</taxon>
        <taxon>Gammaproteobacteria</taxon>
        <taxon>Lysobacterales</taxon>
        <taxon>Lysobacteraceae</taxon>
        <taxon>Xanthomonas</taxon>
    </lineage>
</organism>
<keyword id="KW-1185">Reference proteome</keyword>
<keyword id="KW-0687">Ribonucleoprotein</keyword>
<keyword id="KW-0689">Ribosomal protein</keyword>
<keyword id="KW-0694">RNA-binding</keyword>
<keyword id="KW-0699">rRNA-binding</keyword>